<feature type="chain" id="PRO_0000078818" description="Polymerase basic protein 2">
    <location>
        <begin position="1"/>
        <end position="759"/>
    </location>
</feature>
<feature type="short sequence motif" description="Nuclear localization signal" evidence="1">
    <location>
        <begin position="736"/>
        <end position="739"/>
    </location>
</feature>
<feature type="site" description="Avian adaptation" evidence="1">
    <location>
        <position position="627"/>
    </location>
</feature>
<comment type="function">
    <text evidence="1">Plays an essential role in transcription initiation and cap-stealing mechanism, in which cellular capped pre-mRNAs are used to generate primers for viral transcription. Recognizes and binds the 7-methylguanosine-containing cap of the target pre-RNA which is subsequently cleaved after 10-13 nucleotides by the viral protein PA. Plays a role in the initiation of the viral genome replication and modulates the activity of the ribonucleoprotein (RNP) complex.</text>
</comment>
<comment type="subunit">
    <text evidence="1">Influenza RNA polymerase is composed of three subunits: PB1, PB2 and PA. Interacts (via N-terminus) with PB1 (via C-terminus). Interacts with nucleoprotein NP (via N-terminus).</text>
</comment>
<comment type="subcellular location">
    <subcellularLocation>
        <location evidence="1">Virion</location>
    </subcellularLocation>
    <subcellularLocation>
        <location evidence="1">Host nucleus</location>
    </subcellularLocation>
</comment>
<comment type="similarity">
    <text evidence="1">Belongs to the influenza viruses PB2 family.</text>
</comment>
<sequence length="759" mass="86003">MERIKELRDLMSQSRTREILTKTTVDHMAIIKKYTSGRQEKNPALRMKWMMAMKYPITADKRIMEMIPERNEQGQTLWSKTNDAGSDRVMVSPLAVTWWNRNGPTTSTVHYPKVYKTYFEKIERLKHGTFGPVRFRNQVKIRRRVDINPGHADLSSKEAQDVIMEVVFPNEVGARILTSESQLTITKEKKEELQDCKIAPLMVAYMFERELVRKTRFLPVAGGTSSVYIEVLHLTQGTCWEQMYTPGGEVRNDDVDQSLIIAARNIVRRAAVSADPLASLLEMCHSTQIGGIRMVDILRQNPTEEQAVDICKAAMGLRISSSFSFGGFTFKRTSGSSVKREEEVLTGNLQTLKIRVHEGYEEFTMVGRRATAILRKATRRLIQLIVSGRDEQSIAEAIIVAMVFSQEDCMIKAVRGDLNFVNRANQRLNPMHQLLRHFQKDAKVLFQNWGIEPIDNVMGMVGILPDMTPNTEMSLRGVRVSKMGVDEYSSTERVVVSIDRFLRVRDQRGNVLLSPEEVSETQGTEKLTITYSSSMMWEINGPESVLVNTYQWIIRNWETVKIQWSQDPTMLYNKMEFEPFQSLVLKAARGQYSGFVRTLFQQMRDVLGTFDTVQIIKLLPFAAAPPEQSRMQFSSLTVNVRGSGMRILVRGNSPVFNYNKATKRLTVLGKDAGALTEDPNEGTAGVESAVLRGFLILAKEDKRYGPALSINELSNLAKGEKANVLIGQGDVVLVMKRKRDSSILTDSQTATKRIRMAIN</sequence>
<protein>
    <recommendedName>
        <fullName evidence="1">Polymerase basic protein 2</fullName>
    </recommendedName>
    <alternativeName>
        <fullName evidence="1">RNA-directed RNA polymerase subunit P3</fullName>
    </alternativeName>
</protein>
<evidence type="ECO:0000255" key="1">
    <source>
        <dbReference type="HAMAP-Rule" id="MF_04062"/>
    </source>
</evidence>
<dbReference type="EMBL" id="M38291">
    <property type="protein sequence ID" value="AAA43654.1"/>
    <property type="molecule type" value="Genomic_RNA"/>
</dbReference>
<dbReference type="SMR" id="P18883"/>
<dbReference type="GO" id="GO:0042025">
    <property type="term" value="C:host cell nucleus"/>
    <property type="evidence" value="ECO:0007669"/>
    <property type="project" value="UniProtKB-SubCell"/>
</dbReference>
<dbReference type="GO" id="GO:0044423">
    <property type="term" value="C:virion component"/>
    <property type="evidence" value="ECO:0007669"/>
    <property type="project" value="UniProtKB-UniRule"/>
</dbReference>
<dbReference type="GO" id="GO:0003723">
    <property type="term" value="F:RNA binding"/>
    <property type="evidence" value="ECO:0007669"/>
    <property type="project" value="UniProtKB-UniRule"/>
</dbReference>
<dbReference type="GO" id="GO:0003968">
    <property type="term" value="F:RNA-directed RNA polymerase activity"/>
    <property type="evidence" value="ECO:0007669"/>
    <property type="project" value="UniProtKB-UniRule"/>
</dbReference>
<dbReference type="GO" id="GO:0006370">
    <property type="term" value="P:7-methylguanosine mRNA capping"/>
    <property type="evidence" value="ECO:0007669"/>
    <property type="project" value="UniProtKB-UniRule"/>
</dbReference>
<dbReference type="GO" id="GO:0075526">
    <property type="term" value="P:cap snatching"/>
    <property type="evidence" value="ECO:0007669"/>
    <property type="project" value="UniProtKB-UniRule"/>
</dbReference>
<dbReference type="GO" id="GO:0006351">
    <property type="term" value="P:DNA-templated transcription"/>
    <property type="evidence" value="ECO:0007669"/>
    <property type="project" value="UniProtKB-UniRule"/>
</dbReference>
<dbReference type="GO" id="GO:0039657">
    <property type="term" value="P:symbiont-mediated suppression of host gene expression"/>
    <property type="evidence" value="ECO:0007669"/>
    <property type="project" value="UniProtKB-KW"/>
</dbReference>
<dbReference type="GO" id="GO:0039523">
    <property type="term" value="P:symbiont-mediated suppression of host mRNA transcription via inhibition of RNA polymerase II activity"/>
    <property type="evidence" value="ECO:0007669"/>
    <property type="project" value="UniProtKB-UniRule"/>
</dbReference>
<dbReference type="GO" id="GO:0039694">
    <property type="term" value="P:viral RNA genome replication"/>
    <property type="evidence" value="ECO:0007669"/>
    <property type="project" value="InterPro"/>
</dbReference>
<dbReference type="FunFam" id="3.30.30.90:FF:000001">
    <property type="entry name" value="Polymerase basic protein 2"/>
    <property type="match status" value="1"/>
</dbReference>
<dbReference type="Gene3D" id="3.30.30.90">
    <property type="entry name" value="Polymerase Basic Protein 2, C-terminal domain"/>
    <property type="match status" value="1"/>
</dbReference>
<dbReference type="HAMAP" id="MF_04062">
    <property type="entry name" value="INV_PB2"/>
    <property type="match status" value="1"/>
</dbReference>
<dbReference type="InterPro" id="IPR049110">
    <property type="entry name" value="Flu_PB2_2nd"/>
</dbReference>
<dbReference type="InterPro" id="IPR049114">
    <property type="entry name" value="Flu_PB2_6th"/>
</dbReference>
<dbReference type="InterPro" id="IPR049115">
    <property type="entry name" value="Flu_PB2_C"/>
</dbReference>
<dbReference type="InterPro" id="IPR048298">
    <property type="entry name" value="Flu_PB2_CAP-bd"/>
</dbReference>
<dbReference type="InterPro" id="IPR049111">
    <property type="entry name" value="Flu_PB2_middle"/>
</dbReference>
<dbReference type="InterPro" id="IPR049106">
    <property type="entry name" value="Flu_PB2_N"/>
</dbReference>
<dbReference type="InterPro" id="IPR001591">
    <property type="entry name" value="INV_PB2"/>
</dbReference>
<dbReference type="InterPro" id="IPR049113">
    <property type="entry name" value="PB2_helical"/>
</dbReference>
<dbReference type="InterPro" id="IPR037258">
    <property type="entry name" value="PDB2_C"/>
</dbReference>
<dbReference type="Pfam" id="PF20947">
    <property type="entry name" value="Flu_PB2_1st"/>
    <property type="match status" value="1"/>
</dbReference>
<dbReference type="Pfam" id="PF20948">
    <property type="entry name" value="Flu_PB2_2nd"/>
    <property type="match status" value="1"/>
</dbReference>
<dbReference type="Pfam" id="PF20949">
    <property type="entry name" value="Flu_PB2_3rd"/>
    <property type="match status" value="1"/>
</dbReference>
<dbReference type="Pfam" id="PF20950">
    <property type="entry name" value="Flu_PB2_4th"/>
    <property type="match status" value="1"/>
</dbReference>
<dbReference type="Pfam" id="PF00604">
    <property type="entry name" value="Flu_PB2_5th"/>
    <property type="match status" value="1"/>
</dbReference>
<dbReference type="Pfam" id="PF20951">
    <property type="entry name" value="Flu_PB2_6th"/>
    <property type="match status" value="1"/>
</dbReference>
<dbReference type="Pfam" id="PF20952">
    <property type="entry name" value="Flu_PB2_7th"/>
    <property type="match status" value="1"/>
</dbReference>
<dbReference type="SUPFAM" id="SSF160453">
    <property type="entry name" value="PB2 C-terminal domain-like"/>
    <property type="match status" value="1"/>
</dbReference>
<reference key="1">
    <citation type="journal article" date="1988" name="Bioorg. Khim.">
        <title>Primary structure of the gene encoding the PB2 protein in influenza virus A/FPB Weybridge.</title>
        <authorList>
            <person name="Petrov N.A."/>
            <person name="Mamaev L.V."/>
            <person name="Golovin S.Y."/>
        </authorList>
    </citation>
    <scope>NUCLEOTIDE SEQUENCE [GENOMIC RNA]</scope>
</reference>
<proteinExistence type="inferred from homology"/>
<organismHost>
    <name type="scientific">Aves</name>
    <dbReference type="NCBI Taxonomy" id="8782"/>
</organismHost>
<organismHost>
    <name type="scientific">Equus caballus</name>
    <name type="common">Horse</name>
    <dbReference type="NCBI Taxonomy" id="9796"/>
</organismHost>
<organismHost>
    <name type="scientific">Homo sapiens</name>
    <name type="common">Human</name>
    <dbReference type="NCBI Taxonomy" id="9606"/>
</organismHost>
<organismHost>
    <name type="scientific">Phocidae</name>
    <name type="common">true seals</name>
    <dbReference type="NCBI Taxonomy" id="9709"/>
</organismHost>
<accession>P18883</accession>
<gene>
    <name evidence="1" type="primary">PB2</name>
</gene>
<organism>
    <name type="scientific">Influenza A virus (strain A/Chicken/Weybridge H7N7)</name>
    <name type="common">Influenza A virus (strain A/FPV/Weybridge H7N7)</name>
    <dbReference type="NCBI Taxonomy" id="11384"/>
    <lineage>
        <taxon>Viruses</taxon>
        <taxon>Riboviria</taxon>
        <taxon>Orthornavirae</taxon>
        <taxon>Negarnaviricota</taxon>
        <taxon>Polyploviricotina</taxon>
        <taxon>Insthoviricetes</taxon>
        <taxon>Articulavirales</taxon>
        <taxon>Orthomyxoviridae</taxon>
        <taxon>Alphainfluenzavirus</taxon>
        <taxon>Alphainfluenzavirus influenzae</taxon>
        <taxon>Influenza A virus</taxon>
    </lineage>
</organism>
<name>PB2_I000F</name>
<keyword id="KW-1157">Cap snatching</keyword>
<keyword id="KW-1262">Eukaryotic host gene expression shutoff by virus</keyword>
<keyword id="KW-1191">Eukaryotic host transcription shutoff by virus</keyword>
<keyword id="KW-1190">Host gene expression shutoff by virus</keyword>
<keyword id="KW-1048">Host nucleus</keyword>
<keyword id="KW-0945">Host-virus interaction</keyword>
<keyword id="KW-1104">Inhibition of host RNA polymerase II by virus</keyword>
<keyword id="KW-0506">mRNA capping</keyword>
<keyword id="KW-0507">mRNA processing</keyword>
<keyword id="KW-1195">Viral transcription</keyword>
<keyword id="KW-0946">Virion</keyword>